<sequence>MTQQITLVKDKILSDNYFTLHNITYDLTRKDGEVIRHKREVYDRGNGATILLYNAKKKTVVLIRQFRVATWVNGNESGQLIETCAGLLDNDEPEVCIRKEAIEETGYEVGEVRKLFELYMSPGGVTELIHFFIAEYSDSQRANAGGGVEDEDIEVLELPFSQALEMIKTGEIRDGKTVLLLNYLQMSHLMD</sequence>
<dbReference type="EC" id="3.6.1.-" evidence="1"/>
<dbReference type="EMBL" id="AE014075">
    <property type="protein sequence ID" value="AAN81444.1"/>
    <property type="status" value="ALT_INIT"/>
    <property type="molecule type" value="Genomic_DNA"/>
</dbReference>
<dbReference type="RefSeq" id="WP_001296284.1">
    <property type="nucleotide sequence ID" value="NZ_CP051263.1"/>
</dbReference>
<dbReference type="SMR" id="Q8FF87"/>
<dbReference type="STRING" id="199310.c2994"/>
<dbReference type="KEGG" id="ecc:c2994"/>
<dbReference type="eggNOG" id="COG0494">
    <property type="taxonomic scope" value="Bacteria"/>
</dbReference>
<dbReference type="HOGENOM" id="CLU_062658_6_0_6"/>
<dbReference type="Proteomes" id="UP000001410">
    <property type="component" value="Chromosome"/>
</dbReference>
<dbReference type="GO" id="GO:0005829">
    <property type="term" value="C:cytosol"/>
    <property type="evidence" value="ECO:0007669"/>
    <property type="project" value="TreeGrafter"/>
</dbReference>
<dbReference type="GO" id="GO:0016818">
    <property type="term" value="F:hydrolase activity, acting on acid anhydrides, in phosphorus-containing anhydrides"/>
    <property type="evidence" value="ECO:0007669"/>
    <property type="project" value="InterPro"/>
</dbReference>
<dbReference type="GO" id="GO:0046872">
    <property type="term" value="F:metal ion binding"/>
    <property type="evidence" value="ECO:0007669"/>
    <property type="project" value="UniProtKB-KW"/>
</dbReference>
<dbReference type="GO" id="GO:0006753">
    <property type="term" value="P:nucleoside phosphate metabolic process"/>
    <property type="evidence" value="ECO:0007669"/>
    <property type="project" value="TreeGrafter"/>
</dbReference>
<dbReference type="GO" id="GO:0019693">
    <property type="term" value="P:ribose phosphate metabolic process"/>
    <property type="evidence" value="ECO:0007669"/>
    <property type="project" value="TreeGrafter"/>
</dbReference>
<dbReference type="CDD" id="cd24157">
    <property type="entry name" value="NUDIX_GDPMK"/>
    <property type="match status" value="1"/>
</dbReference>
<dbReference type="FunFam" id="3.90.79.10:FF:000010">
    <property type="entry name" value="GDP-mannose pyrophosphatase NudK"/>
    <property type="match status" value="1"/>
</dbReference>
<dbReference type="Gene3D" id="3.90.79.10">
    <property type="entry name" value="Nucleoside Triphosphate Pyrophosphohydrolase"/>
    <property type="match status" value="1"/>
</dbReference>
<dbReference type="InterPro" id="IPR004385">
    <property type="entry name" value="NDP_pyrophosphatase"/>
</dbReference>
<dbReference type="InterPro" id="IPR015797">
    <property type="entry name" value="NUDIX_hydrolase-like_dom_sf"/>
</dbReference>
<dbReference type="InterPro" id="IPR000086">
    <property type="entry name" value="NUDIX_hydrolase_dom"/>
</dbReference>
<dbReference type="NCBIfam" id="TIGR00052">
    <property type="entry name" value="nudix-type nucleoside diphosphatase, YffH/AdpP family"/>
    <property type="match status" value="1"/>
</dbReference>
<dbReference type="NCBIfam" id="NF011585">
    <property type="entry name" value="PRK15009.1"/>
    <property type="match status" value="1"/>
</dbReference>
<dbReference type="PANTHER" id="PTHR11839:SF18">
    <property type="entry name" value="NUDIX HYDROLASE DOMAIN-CONTAINING PROTEIN"/>
    <property type="match status" value="1"/>
</dbReference>
<dbReference type="PANTHER" id="PTHR11839">
    <property type="entry name" value="UDP/ADP-SUGAR PYROPHOSPHATASE"/>
    <property type="match status" value="1"/>
</dbReference>
<dbReference type="Pfam" id="PF00293">
    <property type="entry name" value="NUDIX"/>
    <property type="match status" value="1"/>
</dbReference>
<dbReference type="SUPFAM" id="SSF55811">
    <property type="entry name" value="Nudix"/>
    <property type="match status" value="1"/>
</dbReference>
<dbReference type="PROSITE" id="PS51462">
    <property type="entry name" value="NUDIX"/>
    <property type="match status" value="1"/>
</dbReference>
<gene>
    <name type="primary">nudK</name>
    <name type="ordered locus">c2994</name>
</gene>
<feature type="chain" id="PRO_0000342489" description="GDP-mannose pyrophosphatase">
    <location>
        <begin position="1"/>
        <end position="191"/>
    </location>
</feature>
<feature type="domain" description="Nudix hydrolase" evidence="2">
    <location>
        <begin position="43"/>
        <end position="180"/>
    </location>
</feature>
<feature type="short sequence motif" description="Nudix box">
    <location>
        <begin position="86"/>
        <end position="106"/>
    </location>
</feature>
<feature type="binding site" description="in other chain" evidence="1">
    <location>
        <position position="17"/>
    </location>
    <ligand>
        <name>GDP-alpha-D-mannose</name>
        <dbReference type="ChEBI" id="CHEBI:57527"/>
        <note>ligand shared between dimeric partners</note>
    </ligand>
</feature>
<feature type="binding site" evidence="1">
    <location>
        <begin position="38"/>
        <end position="40"/>
    </location>
    <ligand>
        <name>GDP-alpha-D-mannose</name>
        <dbReference type="ChEBI" id="CHEBI:57527"/>
        <note>ligand shared between dimeric partners</note>
    </ligand>
</feature>
<feature type="binding site" description="in other chain" evidence="1">
    <location>
        <position position="67"/>
    </location>
    <ligand>
        <name>GDP-alpha-D-mannose</name>
        <dbReference type="ChEBI" id="CHEBI:57527"/>
        <note>ligand shared between dimeric partners</note>
    </ligand>
</feature>
<feature type="binding site" description="in other chain" evidence="1">
    <location>
        <begin position="85"/>
        <end position="87"/>
    </location>
    <ligand>
        <name>GDP-alpha-D-mannose</name>
        <dbReference type="ChEBI" id="CHEBI:57527"/>
        <note>ligand shared between dimeric partners</note>
    </ligand>
</feature>
<feature type="binding site" evidence="1">
    <location>
        <position position="85"/>
    </location>
    <ligand>
        <name>Mg(2+)</name>
        <dbReference type="ChEBI" id="CHEBI:18420"/>
        <label>1</label>
    </ligand>
</feature>
<feature type="binding site" evidence="1">
    <location>
        <position position="100"/>
    </location>
    <ligand>
        <name>Mg(2+)</name>
        <dbReference type="ChEBI" id="CHEBI:18420"/>
        <label>2</label>
    </ligand>
</feature>
<feature type="binding site" description="in other chain" evidence="1">
    <location>
        <position position="104"/>
    </location>
    <ligand>
        <name>GDP-alpha-D-mannose</name>
        <dbReference type="ChEBI" id="CHEBI:57527"/>
        <note>ligand shared between dimeric partners</note>
    </ligand>
</feature>
<feature type="binding site" evidence="1">
    <location>
        <position position="104"/>
    </location>
    <ligand>
        <name>Mg(2+)</name>
        <dbReference type="ChEBI" id="CHEBI:18420"/>
        <label>1</label>
    </ligand>
</feature>
<feature type="binding site" evidence="1">
    <location>
        <position position="104"/>
    </location>
    <ligand>
        <name>Mg(2+)</name>
        <dbReference type="ChEBI" id="CHEBI:18420"/>
        <label>2</label>
    </ligand>
</feature>
<feature type="binding site" description="in other chain" evidence="1">
    <location>
        <position position="127"/>
    </location>
    <ligand>
        <name>GDP-alpha-D-mannose</name>
        <dbReference type="ChEBI" id="CHEBI:57527"/>
        <note>ligand shared between dimeric partners</note>
    </ligand>
</feature>
<feature type="binding site" description="in other chain" evidence="1">
    <location>
        <begin position="150"/>
        <end position="151"/>
    </location>
    <ligand>
        <name>GDP-alpha-D-mannose</name>
        <dbReference type="ChEBI" id="CHEBI:57527"/>
        <note>ligand shared between dimeric partners</note>
    </ligand>
</feature>
<feature type="binding site" evidence="1">
    <location>
        <position position="151"/>
    </location>
    <ligand>
        <name>Mg(2+)</name>
        <dbReference type="ChEBI" id="CHEBI:18420"/>
        <label>2</label>
    </ligand>
</feature>
<feature type="binding site" description="in other chain" evidence="1">
    <location>
        <position position="176"/>
    </location>
    <ligand>
        <name>GDP-alpha-D-mannose</name>
        <dbReference type="ChEBI" id="CHEBI:57527"/>
        <note>ligand shared between dimeric partners</note>
    </ligand>
</feature>
<comment type="function">
    <text evidence="1">Nucleoside diphosphate sugar hydrolase that hydrolyzes GDP-mannose as its preferred substrate, yielding GMP and mannose-1-phosphate.</text>
</comment>
<comment type="catalytic activity">
    <reaction evidence="1">
        <text>GDP-alpha-D-mannose + H2O = alpha-D-mannose 1-phosphate + GMP + 2 H(+)</text>
        <dbReference type="Rhea" id="RHEA:27978"/>
        <dbReference type="ChEBI" id="CHEBI:15377"/>
        <dbReference type="ChEBI" id="CHEBI:15378"/>
        <dbReference type="ChEBI" id="CHEBI:57527"/>
        <dbReference type="ChEBI" id="CHEBI:58115"/>
        <dbReference type="ChEBI" id="CHEBI:58409"/>
    </reaction>
</comment>
<comment type="cofactor">
    <cofactor evidence="1">
        <name>Mg(2+)</name>
        <dbReference type="ChEBI" id="CHEBI:18420"/>
    </cofactor>
</comment>
<comment type="subunit">
    <text evidence="1">Homodimer.</text>
</comment>
<comment type="domain">
    <text evidence="1">In the dimer, the N-terminal domains are swapped between the two monomers, such that residues of both chains contribute to the active site.</text>
</comment>
<comment type="similarity">
    <text evidence="3">Belongs to the Nudix hydrolase family. NudK subfamily.</text>
</comment>
<comment type="sequence caution" evidence="3">
    <conflict type="erroneous initiation">
        <sequence resource="EMBL-CDS" id="AAN81444"/>
    </conflict>
</comment>
<evidence type="ECO:0000250" key="1">
    <source>
        <dbReference type="UniProtKB" id="P37128"/>
    </source>
</evidence>
<evidence type="ECO:0000255" key="2">
    <source>
        <dbReference type="PROSITE-ProRule" id="PRU00794"/>
    </source>
</evidence>
<evidence type="ECO:0000305" key="3"/>
<organism>
    <name type="scientific">Escherichia coli O6:H1 (strain CFT073 / ATCC 700928 / UPEC)</name>
    <dbReference type="NCBI Taxonomy" id="199310"/>
    <lineage>
        <taxon>Bacteria</taxon>
        <taxon>Pseudomonadati</taxon>
        <taxon>Pseudomonadota</taxon>
        <taxon>Gammaproteobacteria</taxon>
        <taxon>Enterobacterales</taxon>
        <taxon>Enterobacteriaceae</taxon>
        <taxon>Escherichia</taxon>
    </lineage>
</organism>
<name>NUDK_ECOL6</name>
<proteinExistence type="inferred from homology"/>
<keyword id="KW-0378">Hydrolase</keyword>
<keyword id="KW-0460">Magnesium</keyword>
<keyword id="KW-0479">Metal-binding</keyword>
<keyword id="KW-1185">Reference proteome</keyword>
<protein>
    <recommendedName>
        <fullName>GDP-mannose pyrophosphatase</fullName>
        <ecNumber evidence="1">3.6.1.-</ecNumber>
    </recommendedName>
    <alternativeName>
        <fullName>GDP-mannose hydrolase</fullName>
    </alternativeName>
    <alternativeName>
        <fullName>GDPMK</fullName>
    </alternativeName>
</protein>
<reference key="1">
    <citation type="journal article" date="2002" name="Proc. Natl. Acad. Sci. U.S.A.">
        <title>Extensive mosaic structure revealed by the complete genome sequence of uropathogenic Escherichia coli.</title>
        <authorList>
            <person name="Welch R.A."/>
            <person name="Burland V."/>
            <person name="Plunkett G. III"/>
            <person name="Redford P."/>
            <person name="Roesch P."/>
            <person name="Rasko D."/>
            <person name="Buckles E.L."/>
            <person name="Liou S.-R."/>
            <person name="Boutin A."/>
            <person name="Hackett J."/>
            <person name="Stroud D."/>
            <person name="Mayhew G.F."/>
            <person name="Rose D.J."/>
            <person name="Zhou S."/>
            <person name="Schwartz D.C."/>
            <person name="Perna N.T."/>
            <person name="Mobley H.L.T."/>
            <person name="Donnenberg M.S."/>
            <person name="Blattner F.R."/>
        </authorList>
    </citation>
    <scope>NUCLEOTIDE SEQUENCE [LARGE SCALE GENOMIC DNA]</scope>
    <source>
        <strain>CFT073 / ATCC 700928 / UPEC</strain>
    </source>
</reference>
<accession>Q8FF87</accession>